<evidence type="ECO:0000255" key="1">
    <source>
        <dbReference type="HAMAP-Rule" id="MF_00374"/>
    </source>
</evidence>
<evidence type="ECO:0000305" key="2"/>
<keyword id="KW-0687">Ribonucleoprotein</keyword>
<keyword id="KW-0689">Ribosomal protein</keyword>
<reference key="1">
    <citation type="submission" date="2007-02" db="EMBL/GenBank/DDBJ databases">
        <title>Complete sequence of chromosome of Yersinia pestis Pestoides F.</title>
        <authorList>
            <consortium name="US DOE Joint Genome Institute"/>
            <person name="Copeland A."/>
            <person name="Lucas S."/>
            <person name="Lapidus A."/>
            <person name="Barry K."/>
            <person name="Detter J.C."/>
            <person name="Glavina del Rio T."/>
            <person name="Hammon N."/>
            <person name="Israni S."/>
            <person name="Dalin E."/>
            <person name="Tice H."/>
            <person name="Pitluck S."/>
            <person name="Di Bartolo G."/>
            <person name="Chain P."/>
            <person name="Malfatti S."/>
            <person name="Shin M."/>
            <person name="Vergez L."/>
            <person name="Schmutz J."/>
            <person name="Larimer F."/>
            <person name="Land M."/>
            <person name="Hauser L."/>
            <person name="Worsham P."/>
            <person name="Chu M."/>
            <person name="Bearden S."/>
            <person name="Garcia E."/>
            <person name="Richardson P."/>
        </authorList>
    </citation>
    <scope>NUCLEOTIDE SEQUENCE [LARGE SCALE GENOMIC DNA]</scope>
    <source>
        <strain>Pestoides F</strain>
    </source>
</reference>
<accession>A4TH00</accession>
<dbReference type="EMBL" id="CP000668">
    <property type="protein sequence ID" value="ABP38563.1"/>
    <property type="molecule type" value="Genomic_DNA"/>
</dbReference>
<dbReference type="RefSeq" id="WP_002218942.1">
    <property type="nucleotide sequence ID" value="NZ_CP009715.1"/>
</dbReference>
<dbReference type="SMR" id="A4TH00"/>
<dbReference type="GeneID" id="96663188"/>
<dbReference type="KEGG" id="ypp:YPDSF_0141"/>
<dbReference type="PATRIC" id="fig|386656.14.peg.426"/>
<dbReference type="GO" id="GO:0022625">
    <property type="term" value="C:cytosolic large ribosomal subunit"/>
    <property type="evidence" value="ECO:0007669"/>
    <property type="project" value="TreeGrafter"/>
</dbReference>
<dbReference type="GO" id="GO:0003735">
    <property type="term" value="F:structural constituent of ribosome"/>
    <property type="evidence" value="ECO:0007669"/>
    <property type="project" value="InterPro"/>
</dbReference>
<dbReference type="GO" id="GO:0006412">
    <property type="term" value="P:translation"/>
    <property type="evidence" value="ECO:0007669"/>
    <property type="project" value="UniProtKB-UniRule"/>
</dbReference>
<dbReference type="CDD" id="cd00427">
    <property type="entry name" value="Ribosomal_L29_HIP"/>
    <property type="match status" value="1"/>
</dbReference>
<dbReference type="FunFam" id="1.10.287.310:FF:000001">
    <property type="entry name" value="50S ribosomal protein L29"/>
    <property type="match status" value="1"/>
</dbReference>
<dbReference type="Gene3D" id="6.10.140.1970">
    <property type="match status" value="1"/>
</dbReference>
<dbReference type="HAMAP" id="MF_00374">
    <property type="entry name" value="Ribosomal_uL29"/>
    <property type="match status" value="1"/>
</dbReference>
<dbReference type="InterPro" id="IPR050063">
    <property type="entry name" value="Ribosomal_protein_uL29"/>
</dbReference>
<dbReference type="InterPro" id="IPR001854">
    <property type="entry name" value="Ribosomal_uL29"/>
</dbReference>
<dbReference type="InterPro" id="IPR018254">
    <property type="entry name" value="Ribosomal_uL29_CS"/>
</dbReference>
<dbReference type="InterPro" id="IPR036049">
    <property type="entry name" value="Ribosomal_uL29_sf"/>
</dbReference>
<dbReference type="NCBIfam" id="TIGR00012">
    <property type="entry name" value="L29"/>
    <property type="match status" value="1"/>
</dbReference>
<dbReference type="PANTHER" id="PTHR10916">
    <property type="entry name" value="60S RIBOSOMAL PROTEIN L35/50S RIBOSOMAL PROTEIN L29"/>
    <property type="match status" value="1"/>
</dbReference>
<dbReference type="PANTHER" id="PTHR10916:SF0">
    <property type="entry name" value="LARGE RIBOSOMAL SUBUNIT PROTEIN UL29C"/>
    <property type="match status" value="1"/>
</dbReference>
<dbReference type="Pfam" id="PF00831">
    <property type="entry name" value="Ribosomal_L29"/>
    <property type="match status" value="1"/>
</dbReference>
<dbReference type="SUPFAM" id="SSF46561">
    <property type="entry name" value="Ribosomal protein L29 (L29p)"/>
    <property type="match status" value="1"/>
</dbReference>
<dbReference type="PROSITE" id="PS00579">
    <property type="entry name" value="RIBOSOMAL_L29"/>
    <property type="match status" value="1"/>
</dbReference>
<organism>
    <name type="scientific">Yersinia pestis (strain Pestoides F)</name>
    <dbReference type="NCBI Taxonomy" id="386656"/>
    <lineage>
        <taxon>Bacteria</taxon>
        <taxon>Pseudomonadati</taxon>
        <taxon>Pseudomonadota</taxon>
        <taxon>Gammaproteobacteria</taxon>
        <taxon>Enterobacterales</taxon>
        <taxon>Yersiniaceae</taxon>
        <taxon>Yersinia</taxon>
    </lineage>
</organism>
<name>RL29_YERPP</name>
<feature type="chain" id="PRO_1000007659" description="Large ribosomal subunit protein uL29">
    <location>
        <begin position="1"/>
        <end position="63"/>
    </location>
</feature>
<comment type="similarity">
    <text evidence="1">Belongs to the universal ribosomal protein uL29 family.</text>
</comment>
<protein>
    <recommendedName>
        <fullName evidence="1">Large ribosomal subunit protein uL29</fullName>
    </recommendedName>
    <alternativeName>
        <fullName evidence="2">50S ribosomal protein L29</fullName>
    </alternativeName>
</protein>
<proteinExistence type="inferred from homology"/>
<sequence length="63" mass="7273">MKAQELREKSVEELNTELLNLLREQFNLRMQAASGQLQQTHLLKQVRRNVARVKTLLTEKAGA</sequence>
<gene>
    <name evidence="1" type="primary">rpmC</name>
    <name type="ordered locus">YPDSF_0141</name>
</gene>